<proteinExistence type="inferred from homology"/>
<evidence type="ECO:0000255" key="1">
    <source>
        <dbReference type="HAMAP-Rule" id="MF_01374"/>
    </source>
</evidence>
<organism>
    <name type="scientific">Methylococcus capsulatus (strain ATCC 33009 / NCIMB 11132 / Bath)</name>
    <dbReference type="NCBI Taxonomy" id="243233"/>
    <lineage>
        <taxon>Bacteria</taxon>
        <taxon>Pseudomonadati</taxon>
        <taxon>Pseudomonadota</taxon>
        <taxon>Gammaproteobacteria</taxon>
        <taxon>Methylococcales</taxon>
        <taxon>Methylococcaceae</taxon>
        <taxon>Methylococcus</taxon>
    </lineage>
</organism>
<feature type="chain" id="PRO_0000309661" description="Hydroxyacylglutathione hydrolase">
    <location>
        <begin position="1"/>
        <end position="256"/>
    </location>
</feature>
<feature type="binding site" evidence="1">
    <location>
        <position position="55"/>
    </location>
    <ligand>
        <name>Zn(2+)</name>
        <dbReference type="ChEBI" id="CHEBI:29105"/>
        <label>1</label>
    </ligand>
</feature>
<feature type="binding site" evidence="1">
    <location>
        <position position="57"/>
    </location>
    <ligand>
        <name>Zn(2+)</name>
        <dbReference type="ChEBI" id="CHEBI:29105"/>
        <label>1</label>
    </ligand>
</feature>
<feature type="binding site" evidence="1">
    <location>
        <position position="59"/>
    </location>
    <ligand>
        <name>Zn(2+)</name>
        <dbReference type="ChEBI" id="CHEBI:29105"/>
        <label>2</label>
    </ligand>
</feature>
<feature type="binding site" evidence="1">
    <location>
        <position position="60"/>
    </location>
    <ligand>
        <name>Zn(2+)</name>
        <dbReference type="ChEBI" id="CHEBI:29105"/>
        <label>2</label>
    </ligand>
</feature>
<feature type="binding site" evidence="1">
    <location>
        <position position="113"/>
    </location>
    <ligand>
        <name>Zn(2+)</name>
        <dbReference type="ChEBI" id="CHEBI:29105"/>
        <label>1</label>
    </ligand>
</feature>
<feature type="binding site" evidence="1">
    <location>
        <position position="132"/>
    </location>
    <ligand>
        <name>Zn(2+)</name>
        <dbReference type="ChEBI" id="CHEBI:29105"/>
        <label>1</label>
    </ligand>
</feature>
<feature type="binding site" evidence="1">
    <location>
        <position position="132"/>
    </location>
    <ligand>
        <name>Zn(2+)</name>
        <dbReference type="ChEBI" id="CHEBI:29105"/>
        <label>2</label>
    </ligand>
</feature>
<feature type="binding site" evidence="1">
    <location>
        <position position="170"/>
    </location>
    <ligand>
        <name>Zn(2+)</name>
        <dbReference type="ChEBI" id="CHEBI:29105"/>
        <label>2</label>
    </ligand>
</feature>
<sequence>MLEILQIPVLEDNYVYLLHEPGSGATAAVDPAVAGPVLEALDARGWRLGHVLNTHHHGDHVGGNLELKAATGCTVVGAAGDRHRIPGIDVALKDGEEFRLGSASARMLDVPGHTSGHVAFWFEDDAALFCGDTLFALGCGRLFEGSAEQMWRSLERLRALPAETKVFCAHEYTQANARFAVTIEPGNAALRERVERVEALRREGAATVPSILSEELATNPFLRPESPEIRARLGLPGVPEVEVFAEIRRRKDVFRG</sequence>
<comment type="function">
    <text evidence="1">Thiolesterase that catalyzes the hydrolysis of S-D-lactoyl-glutathione to form glutathione and D-lactic acid.</text>
</comment>
<comment type="catalytic activity">
    <reaction evidence="1">
        <text>an S-(2-hydroxyacyl)glutathione + H2O = a 2-hydroxy carboxylate + glutathione + H(+)</text>
        <dbReference type="Rhea" id="RHEA:21864"/>
        <dbReference type="ChEBI" id="CHEBI:15377"/>
        <dbReference type="ChEBI" id="CHEBI:15378"/>
        <dbReference type="ChEBI" id="CHEBI:57925"/>
        <dbReference type="ChEBI" id="CHEBI:58896"/>
        <dbReference type="ChEBI" id="CHEBI:71261"/>
        <dbReference type="EC" id="3.1.2.6"/>
    </reaction>
</comment>
<comment type="cofactor">
    <cofactor evidence="1">
        <name>Zn(2+)</name>
        <dbReference type="ChEBI" id="CHEBI:29105"/>
    </cofactor>
    <text evidence="1">Binds 2 Zn(2+) ions per subunit.</text>
</comment>
<comment type="pathway">
    <text evidence="1">Secondary metabolite metabolism; methylglyoxal degradation; (R)-lactate from methylglyoxal: step 2/2.</text>
</comment>
<comment type="subunit">
    <text evidence="1">Monomer.</text>
</comment>
<comment type="similarity">
    <text evidence="1">Belongs to the metallo-beta-lactamase superfamily. Glyoxalase II family.</text>
</comment>
<gene>
    <name evidence="1" type="primary">gloB</name>
    <name type="ordered locus">MCA0343</name>
</gene>
<accession>Q60BX0</accession>
<reference key="1">
    <citation type="journal article" date="2004" name="PLoS Biol.">
        <title>Genomic insights into methanotrophy: the complete genome sequence of Methylococcus capsulatus (Bath).</title>
        <authorList>
            <person name="Ward N.L."/>
            <person name="Larsen O."/>
            <person name="Sakwa J."/>
            <person name="Bruseth L."/>
            <person name="Khouri H.M."/>
            <person name="Durkin A.S."/>
            <person name="Dimitrov G."/>
            <person name="Jiang L."/>
            <person name="Scanlan D."/>
            <person name="Kang K.H."/>
            <person name="Lewis M.R."/>
            <person name="Nelson K.E."/>
            <person name="Methe B.A."/>
            <person name="Wu M."/>
            <person name="Heidelberg J.F."/>
            <person name="Paulsen I.T."/>
            <person name="Fouts D.E."/>
            <person name="Ravel J."/>
            <person name="Tettelin H."/>
            <person name="Ren Q."/>
            <person name="Read T.D."/>
            <person name="DeBoy R.T."/>
            <person name="Seshadri R."/>
            <person name="Salzberg S.L."/>
            <person name="Jensen H.B."/>
            <person name="Birkeland N.K."/>
            <person name="Nelson W.C."/>
            <person name="Dodson R.J."/>
            <person name="Grindhaug S.H."/>
            <person name="Holt I.E."/>
            <person name="Eidhammer I."/>
            <person name="Jonasen I."/>
            <person name="Vanaken S."/>
            <person name="Utterback T.R."/>
            <person name="Feldblyum T.V."/>
            <person name="Fraser C.M."/>
            <person name="Lillehaug J.R."/>
            <person name="Eisen J.A."/>
        </authorList>
    </citation>
    <scope>NUCLEOTIDE SEQUENCE [LARGE SCALE GENOMIC DNA]</scope>
    <source>
        <strain>ATCC 33009 / NCIMB 11132 / Bath</strain>
    </source>
</reference>
<protein>
    <recommendedName>
        <fullName evidence="1">Hydroxyacylglutathione hydrolase</fullName>
        <ecNumber evidence="1">3.1.2.6</ecNumber>
    </recommendedName>
    <alternativeName>
        <fullName evidence="1">Glyoxalase II</fullName>
        <shortName evidence="1">Glx II</shortName>
    </alternativeName>
</protein>
<keyword id="KW-0378">Hydrolase</keyword>
<keyword id="KW-0479">Metal-binding</keyword>
<keyword id="KW-1185">Reference proteome</keyword>
<keyword id="KW-0862">Zinc</keyword>
<name>GLO2_METCA</name>
<dbReference type="EC" id="3.1.2.6" evidence="1"/>
<dbReference type="EMBL" id="AE017282">
    <property type="protein sequence ID" value="AAU90561.1"/>
    <property type="molecule type" value="Genomic_DNA"/>
</dbReference>
<dbReference type="RefSeq" id="WP_010959704.1">
    <property type="nucleotide sequence ID" value="NC_002977.6"/>
</dbReference>
<dbReference type="SMR" id="Q60BX0"/>
<dbReference type="STRING" id="243233.MCA0343"/>
<dbReference type="GeneID" id="88222683"/>
<dbReference type="KEGG" id="mca:MCA0343"/>
<dbReference type="eggNOG" id="COG0491">
    <property type="taxonomic scope" value="Bacteria"/>
</dbReference>
<dbReference type="HOGENOM" id="CLU_030571_4_1_6"/>
<dbReference type="UniPathway" id="UPA00619">
    <property type="reaction ID" value="UER00676"/>
</dbReference>
<dbReference type="Proteomes" id="UP000006821">
    <property type="component" value="Chromosome"/>
</dbReference>
<dbReference type="GO" id="GO:0008800">
    <property type="term" value="F:beta-lactamase activity"/>
    <property type="evidence" value="ECO:0007669"/>
    <property type="project" value="InterPro"/>
</dbReference>
<dbReference type="GO" id="GO:0004416">
    <property type="term" value="F:hydroxyacylglutathione hydrolase activity"/>
    <property type="evidence" value="ECO:0007669"/>
    <property type="project" value="UniProtKB-UniRule"/>
</dbReference>
<dbReference type="GO" id="GO:0008270">
    <property type="term" value="F:zinc ion binding"/>
    <property type="evidence" value="ECO:0007669"/>
    <property type="project" value="InterPro"/>
</dbReference>
<dbReference type="GO" id="GO:0017001">
    <property type="term" value="P:antibiotic catabolic process"/>
    <property type="evidence" value="ECO:0007669"/>
    <property type="project" value="InterPro"/>
</dbReference>
<dbReference type="GO" id="GO:0019243">
    <property type="term" value="P:methylglyoxal catabolic process to D-lactate via S-lactoyl-glutathione"/>
    <property type="evidence" value="ECO:0007669"/>
    <property type="project" value="InterPro"/>
</dbReference>
<dbReference type="CDD" id="cd07723">
    <property type="entry name" value="hydroxyacylglutathione_hydrolase_MBL-fold"/>
    <property type="match status" value="1"/>
</dbReference>
<dbReference type="Gene3D" id="3.60.15.10">
    <property type="entry name" value="Ribonuclease Z/Hydroxyacylglutathione hydrolase-like"/>
    <property type="match status" value="1"/>
</dbReference>
<dbReference type="HAMAP" id="MF_01374">
    <property type="entry name" value="Glyoxalase_2"/>
    <property type="match status" value="1"/>
</dbReference>
<dbReference type="InterPro" id="IPR001018">
    <property type="entry name" value="Beta-lactamase_class-B_CS"/>
</dbReference>
<dbReference type="InterPro" id="IPR035680">
    <property type="entry name" value="Clx_II_MBL"/>
</dbReference>
<dbReference type="InterPro" id="IPR050110">
    <property type="entry name" value="Glyoxalase_II_hydrolase"/>
</dbReference>
<dbReference type="InterPro" id="IPR032282">
    <property type="entry name" value="HAGH_C"/>
</dbReference>
<dbReference type="InterPro" id="IPR017782">
    <property type="entry name" value="Hydroxyacylglutathione_Hdrlase"/>
</dbReference>
<dbReference type="InterPro" id="IPR001279">
    <property type="entry name" value="Metallo-B-lactamas"/>
</dbReference>
<dbReference type="InterPro" id="IPR036866">
    <property type="entry name" value="RibonucZ/Hydroxyglut_hydro"/>
</dbReference>
<dbReference type="NCBIfam" id="TIGR03413">
    <property type="entry name" value="GSH_gloB"/>
    <property type="match status" value="1"/>
</dbReference>
<dbReference type="PANTHER" id="PTHR43705">
    <property type="entry name" value="HYDROXYACYLGLUTATHIONE HYDROLASE"/>
    <property type="match status" value="1"/>
</dbReference>
<dbReference type="PANTHER" id="PTHR43705:SF1">
    <property type="entry name" value="HYDROXYACYLGLUTATHIONE HYDROLASE GLOB"/>
    <property type="match status" value="1"/>
</dbReference>
<dbReference type="Pfam" id="PF16123">
    <property type="entry name" value="HAGH_C"/>
    <property type="match status" value="1"/>
</dbReference>
<dbReference type="Pfam" id="PF00753">
    <property type="entry name" value="Lactamase_B"/>
    <property type="match status" value="1"/>
</dbReference>
<dbReference type="PIRSF" id="PIRSF005457">
    <property type="entry name" value="Glx"/>
    <property type="match status" value="1"/>
</dbReference>
<dbReference type="SMART" id="SM00849">
    <property type="entry name" value="Lactamase_B"/>
    <property type="match status" value="1"/>
</dbReference>
<dbReference type="SUPFAM" id="SSF56281">
    <property type="entry name" value="Metallo-hydrolase/oxidoreductase"/>
    <property type="match status" value="1"/>
</dbReference>